<keyword id="KW-1003">Cell membrane</keyword>
<keyword id="KW-0472">Membrane</keyword>
<keyword id="KW-1185">Reference proteome</keyword>
<keyword id="KW-0677">Repeat</keyword>
<keyword id="KW-0812">Transmembrane</keyword>
<keyword id="KW-1133">Transmembrane helix</keyword>
<keyword id="KW-0813">Transport</keyword>
<comment type="function">
    <text evidence="3 4 5 6 7">Aquaglyceroporins form homotetrameric transmembrane channels, with each monomer independently mediating glycerol and water transport across the plasma membrane along their osmotic gradient (PubMed:10205677, PubMed:9733774). AQP9 is the primary route for glycerol uptake in hepatocytes, supporting hepatic gluconeogenesis (By similarity). It exhibits broad specificity and may transport various small, non-charged solutes, including carbamides, polyols, purines, and pyrimidines (PubMed:9733774). AQP9 may also facilitate hepatic urea extrusion. Due to its permeability to lactate, AQP9 might participate in the astrocyte-to-neuron lactate shuttle, supplying neurons with energy. Additionally, AQP9 is permeable to arsenite, contributing to arsenic excretion by the liver and providing partial protection against arsenic toxicity (PubMed:11972053). It is also permeable to H2O2 in vivo (By similarity). Could also be permeable to ammonium (PubMed:15988592).</text>
</comment>
<comment type="catalytic activity">
    <reaction evidence="4">
        <text>H2O(in) = H2O(out)</text>
        <dbReference type="Rhea" id="RHEA:29667"/>
        <dbReference type="ChEBI" id="CHEBI:15377"/>
    </reaction>
</comment>
<comment type="catalytic activity">
    <reaction evidence="4 7">
        <text>glycerol(in) = glycerol(out)</text>
        <dbReference type="Rhea" id="RHEA:29675"/>
        <dbReference type="ChEBI" id="CHEBI:17754"/>
    </reaction>
</comment>
<comment type="catalytic activity">
    <reaction evidence="10 13">
        <text>urea(in) = urea(out)</text>
        <dbReference type="Rhea" id="RHEA:32799"/>
        <dbReference type="ChEBI" id="CHEBI:16199"/>
    </reaction>
</comment>
<comment type="catalytic activity">
    <reaction evidence="3">
        <text>(S)-lactate(in) = (S)-lactate(out)</text>
        <dbReference type="Rhea" id="RHEA:34987"/>
        <dbReference type="ChEBI" id="CHEBI:16651"/>
    </reaction>
</comment>
<comment type="catalytic activity">
    <reaction evidence="12">
        <text>NH4(+)(in) = NH4(+)(out)</text>
        <dbReference type="Rhea" id="RHEA:28747"/>
        <dbReference type="ChEBI" id="CHEBI:28938"/>
    </reaction>
</comment>
<comment type="catalytic activity">
    <reaction evidence="13">
        <text>uracil(in) = uracil(out)</text>
        <dbReference type="Rhea" id="RHEA:69404"/>
        <dbReference type="ChEBI" id="CHEBI:17568"/>
    </reaction>
</comment>
<comment type="catalytic activity">
    <reaction evidence="13">
        <text>adenine(out) = adenine(in)</text>
        <dbReference type="Rhea" id="RHEA:71523"/>
        <dbReference type="ChEBI" id="CHEBI:16708"/>
    </reaction>
</comment>
<comment type="catalytic activity">
    <reaction evidence="1">
        <text>3-hydroxybutanoate(in) = 3-hydroxybutanoate(out)</text>
        <dbReference type="Rhea" id="RHEA:81351"/>
        <dbReference type="ChEBI" id="CHEBI:37054"/>
    </reaction>
</comment>
<comment type="catalytic activity">
    <reaction evidence="13">
        <text>D-sorbitol(in) = D-sorbitol(out)</text>
        <dbReference type="Rhea" id="RHEA:81359"/>
        <dbReference type="ChEBI" id="CHEBI:17924"/>
    </reaction>
</comment>
<comment type="catalytic activity">
    <reaction evidence="13">
        <text>D-mannitol(in) = D-mannitol(out)</text>
        <dbReference type="Rhea" id="RHEA:81355"/>
        <dbReference type="ChEBI" id="CHEBI:16899"/>
    </reaction>
</comment>
<comment type="catalytic activity">
    <reaction evidence="1">
        <text>H2O2(out) = H2O2(in)</text>
        <dbReference type="Rhea" id="RHEA:74375"/>
        <dbReference type="ChEBI" id="CHEBI:16240"/>
    </reaction>
</comment>
<comment type="catalytic activity">
    <reaction evidence="11">
        <text>arsenite(in) = arsenite(out)</text>
        <dbReference type="Rhea" id="RHEA:81347"/>
        <dbReference type="ChEBI" id="CHEBI:29242"/>
    </reaction>
</comment>
<comment type="catalytic activity">
    <reaction evidence="1">
        <text>selenite(in) = selenite(out)</text>
        <dbReference type="Rhea" id="RHEA:34891"/>
        <dbReference type="ChEBI" id="CHEBI:18212"/>
    </reaction>
</comment>
<comment type="activity regulation">
    <text evidence="7">Channel activity is inhibited by mercury ions and phloretin.</text>
</comment>
<comment type="subunit">
    <text evidence="2">Homotetramer; each monomer provides an independent glycerol/water pore.</text>
</comment>
<comment type="subcellular location">
    <subcellularLocation>
        <location evidence="7">Cell membrane</location>
        <topology evidence="2">Multi-pass membrane protein</topology>
    </subcellularLocation>
    <subcellularLocation>
        <location evidence="3">Basolateral cell membrane</location>
        <topology evidence="2">Multi-pass membrane protein</topology>
    </subcellularLocation>
    <text evidence="3">Functions at the hepatocyte basolateral membrane.</text>
</comment>
<comment type="tissue specificity">
    <text evidence="7">Detected in testis and liver. Detected in immature spermatocytes and in interstitial Leydig cells.</text>
</comment>
<comment type="domain">
    <text evidence="2">Aquaporins contain two tandem repeats each containing three membrane-spanning domains and a pore-forming loop with the signature motif Asn-Pro-Ala (NPA).</text>
</comment>
<comment type="similarity">
    <text evidence="9">Belongs to the MIP/aquaporin (TC 1.A.8) family.</text>
</comment>
<accession>P56627</accession>
<accession>O88815</accession>
<reference key="1">
    <citation type="journal article" date="1998" name="J. Biol. Chem.">
        <title>Molecular characterization of a broad selectivity neutral solute channel.</title>
        <authorList>
            <person name="Tsukaguchi H."/>
            <person name="Shayakul C."/>
            <person name="Berger U.V."/>
            <person name="MacKenzie B."/>
            <person name="Devidas S."/>
            <person name="Guggino W.B."/>
            <person name="van Hoek A.N."/>
            <person name="Hediger M.A."/>
        </authorList>
    </citation>
    <scope>NUCLEOTIDE SEQUENCE [MRNA]</scope>
    <scope>FUNCTION</scope>
    <scope>TRANSPORTER ACTIVITY</scope>
    <scope>SUBCELLULAR LOCATION</scope>
    <scope>ACTIVITY REGULATION</scope>
    <scope>TISSUE SPECIFICITY</scope>
    <source>
        <strain>Sprague-Dawley</strain>
    </source>
</reference>
<reference key="2">
    <citation type="journal article" date="1999" name="Biochem. Mol. Biol. Int.">
        <title>Cloning and functional expression of rAQP9L a new member of aquaporin family from rat liver.</title>
        <authorList>
            <person name="Ko S.B."/>
            <person name="Uchida S."/>
            <person name="Naruse S."/>
            <person name="Kuwahara M."/>
            <person name="Ishibashi K."/>
            <person name="Marumo F."/>
            <person name="Hayakawa T."/>
            <person name="Sasaki S."/>
        </authorList>
    </citation>
    <scope>NUCLEOTIDE SEQUENCE [MRNA]</scope>
    <scope>FUNCTION</scope>
    <scope>TRANSPORTER ACTIVITY</scope>
    <source>
        <tissue>Liver</tissue>
    </source>
</reference>
<reference key="3">
    <citation type="journal article" date="2004" name="Genome Res.">
        <title>The status, quality, and expansion of the NIH full-length cDNA project: the Mammalian Gene Collection (MGC).</title>
        <authorList>
            <consortium name="The MGC Project Team"/>
        </authorList>
    </citation>
    <scope>NUCLEOTIDE SEQUENCE [LARGE SCALE MRNA]</scope>
    <source>
        <tissue>Testis</tissue>
    </source>
</reference>
<reference key="4">
    <citation type="journal article" date="2002" name="Proc. Natl. Acad. Sci. U.S.A.">
        <title>Arsenite transport by mammalian aquaglyceroporins AQP7 and AQP9.</title>
        <authorList>
            <person name="Liu Z."/>
            <person name="Shen J."/>
            <person name="Carbrey J.M."/>
            <person name="Mukhopadhyay R."/>
            <person name="Agre P."/>
            <person name="Rosen B.P."/>
        </authorList>
    </citation>
    <scope>FUNCTION</scope>
    <scope>TRANSPORTER ACTIVITY</scope>
</reference>
<reference key="5">
    <citation type="journal article" date="2005" name="Pflugers Arch.">
        <title>NH3 and NH4+ permeability in aquaporin-expressing Xenopus oocytes.</title>
        <authorList>
            <person name="Holm L.M."/>
            <person name="Jahn T.P."/>
            <person name="Moeller A.L."/>
            <person name="Schjoerring J.K."/>
            <person name="Ferri D."/>
            <person name="Klaerke D.A."/>
            <person name="Zeuthen T."/>
        </authorList>
    </citation>
    <scope>FUNCTION</scope>
    <scope>TRANSPORTER ACTIVITY</scope>
</reference>
<proteinExistence type="evidence at transcript level"/>
<dbReference type="EMBL" id="AF016406">
    <property type="protein sequence ID" value="AAC36020.1"/>
    <property type="molecule type" value="mRNA"/>
</dbReference>
<dbReference type="EMBL" id="AB013112">
    <property type="protein sequence ID" value="BAA33680.1"/>
    <property type="molecule type" value="mRNA"/>
</dbReference>
<dbReference type="EMBL" id="BC085731">
    <property type="protein sequence ID" value="AAH85731.1"/>
    <property type="molecule type" value="mRNA"/>
</dbReference>
<dbReference type="RefSeq" id="NP_075249.1">
    <property type="nucleotide sequence ID" value="NM_022960.2"/>
</dbReference>
<dbReference type="RefSeq" id="XP_006243424.1">
    <property type="nucleotide sequence ID" value="XM_006243362.3"/>
</dbReference>
<dbReference type="RefSeq" id="XP_008764558.1">
    <property type="nucleotide sequence ID" value="XM_008766336.2"/>
</dbReference>
<dbReference type="RefSeq" id="XP_038938023.1">
    <property type="nucleotide sequence ID" value="XM_039082095.2"/>
</dbReference>
<dbReference type="RefSeq" id="XP_038938024.1">
    <property type="nucleotide sequence ID" value="XM_039082096.2"/>
</dbReference>
<dbReference type="RefSeq" id="XP_038938025.1">
    <property type="nucleotide sequence ID" value="XM_039082097.2"/>
</dbReference>
<dbReference type="RefSeq" id="XP_038938027.1">
    <property type="nucleotide sequence ID" value="XM_039082099.2"/>
</dbReference>
<dbReference type="RefSeq" id="XP_038938028.1">
    <property type="nucleotide sequence ID" value="XM_039082100.2"/>
</dbReference>
<dbReference type="RefSeq" id="XP_063122151.1">
    <property type="nucleotide sequence ID" value="XM_063266081.1"/>
</dbReference>
<dbReference type="RefSeq" id="XP_063122152.1">
    <property type="nucleotide sequence ID" value="XM_063266082.1"/>
</dbReference>
<dbReference type="RefSeq" id="XP_063122153.1">
    <property type="nucleotide sequence ID" value="XM_063266083.1"/>
</dbReference>
<dbReference type="RefSeq" id="XP_063122154.1">
    <property type="nucleotide sequence ID" value="XM_063266084.1"/>
</dbReference>
<dbReference type="RefSeq" id="XP_063122155.1">
    <property type="nucleotide sequence ID" value="XM_063266085.1"/>
</dbReference>
<dbReference type="SMR" id="P56627"/>
<dbReference type="FunCoup" id="P56627">
    <property type="interactions" value="77"/>
</dbReference>
<dbReference type="STRING" id="10116.ENSRNOP00000069377"/>
<dbReference type="TCDB" id="1.A.8.9.2">
    <property type="family name" value="the major intrinsic protein (mip) family"/>
</dbReference>
<dbReference type="iPTMnet" id="P56627"/>
<dbReference type="PhosphoSitePlus" id="P56627"/>
<dbReference type="PaxDb" id="10116-ENSRNOP00000021442"/>
<dbReference type="Ensembl" id="ENSRNOT00000087980.2">
    <property type="protein sequence ID" value="ENSRNOP00000069377.1"/>
    <property type="gene ID" value="ENSRNOG00000061883.2"/>
</dbReference>
<dbReference type="GeneID" id="65054"/>
<dbReference type="KEGG" id="rno:65054"/>
<dbReference type="UCSC" id="RGD:68433">
    <property type="organism name" value="rat"/>
</dbReference>
<dbReference type="AGR" id="RGD:68433"/>
<dbReference type="CTD" id="366"/>
<dbReference type="RGD" id="68433">
    <property type="gene designation" value="Aqp9"/>
</dbReference>
<dbReference type="eggNOG" id="KOG0224">
    <property type="taxonomic scope" value="Eukaryota"/>
</dbReference>
<dbReference type="GeneTree" id="ENSGT00940000160582"/>
<dbReference type="HOGENOM" id="CLU_020019_9_1_1"/>
<dbReference type="InParanoid" id="P56627"/>
<dbReference type="OMA" id="MQPEMEQ"/>
<dbReference type="OrthoDB" id="34568at9989"/>
<dbReference type="PhylomeDB" id="P56627"/>
<dbReference type="TreeFam" id="TF313173"/>
<dbReference type="Reactome" id="R-RNO-432030">
    <property type="pathway name" value="Transport of glycerol from adipocytes to the liver by Aquaporins"/>
</dbReference>
<dbReference type="Reactome" id="R-RNO-432047">
    <property type="pathway name" value="Passive transport by Aquaporins"/>
</dbReference>
<dbReference type="PRO" id="PR:P56627"/>
<dbReference type="Proteomes" id="UP000002494">
    <property type="component" value="Chromosome 8"/>
</dbReference>
<dbReference type="Bgee" id="ENSRNOG00000061883">
    <property type="expression patterns" value="Expressed in liver and 13 other cell types or tissues"/>
</dbReference>
<dbReference type="GO" id="GO:0016323">
    <property type="term" value="C:basolateral plasma membrane"/>
    <property type="evidence" value="ECO:0000314"/>
    <property type="project" value="RGD"/>
</dbReference>
<dbReference type="GO" id="GO:0043231">
    <property type="term" value="C:intracellular membrane-bounded organelle"/>
    <property type="evidence" value="ECO:0000266"/>
    <property type="project" value="RGD"/>
</dbReference>
<dbReference type="GO" id="GO:0016020">
    <property type="term" value="C:membrane"/>
    <property type="evidence" value="ECO:0000303"/>
    <property type="project" value="UniProtKB"/>
</dbReference>
<dbReference type="GO" id="GO:0005886">
    <property type="term" value="C:plasma membrane"/>
    <property type="evidence" value="ECO:0000250"/>
    <property type="project" value="UniProtKB"/>
</dbReference>
<dbReference type="GO" id="GO:0015267">
    <property type="term" value="F:channel activity"/>
    <property type="evidence" value="ECO:0000266"/>
    <property type="project" value="RGD"/>
</dbReference>
<dbReference type="GO" id="GO:0015254">
    <property type="term" value="F:glycerol channel activity"/>
    <property type="evidence" value="ECO:0000314"/>
    <property type="project" value="UniProtKB"/>
</dbReference>
<dbReference type="GO" id="GO:0140070">
    <property type="term" value="F:hydrogen peroxide channel activity"/>
    <property type="evidence" value="ECO:0000250"/>
    <property type="project" value="UniProtKB"/>
</dbReference>
<dbReference type="GO" id="GO:0015166">
    <property type="term" value="F:polyol transmembrane transporter activity"/>
    <property type="evidence" value="ECO:0000314"/>
    <property type="project" value="UniProtKB"/>
</dbReference>
<dbReference type="GO" id="GO:0005345">
    <property type="term" value="F:purine nucleobase transmembrane transporter activity"/>
    <property type="evidence" value="ECO:0000314"/>
    <property type="project" value="UniProtKB"/>
</dbReference>
<dbReference type="GO" id="GO:0005350">
    <property type="term" value="F:pyrimidine nucleobase transmembrane transporter activity"/>
    <property type="evidence" value="ECO:0000314"/>
    <property type="project" value="UniProtKB"/>
</dbReference>
<dbReference type="GO" id="GO:0015265">
    <property type="term" value="F:urea channel activity"/>
    <property type="evidence" value="ECO:0000314"/>
    <property type="project" value="UniProtKB"/>
</dbReference>
<dbReference type="GO" id="GO:0015204">
    <property type="term" value="F:urea transmembrane transporter activity"/>
    <property type="evidence" value="ECO:0000314"/>
    <property type="project" value="UniProtKB"/>
</dbReference>
<dbReference type="GO" id="GO:0015250">
    <property type="term" value="F:water channel activity"/>
    <property type="evidence" value="ECO:0000314"/>
    <property type="project" value="UniProtKB"/>
</dbReference>
<dbReference type="GO" id="GO:0015837">
    <property type="term" value="P:amine transport"/>
    <property type="evidence" value="ECO:0000314"/>
    <property type="project" value="UniProtKB"/>
</dbReference>
<dbReference type="GO" id="GO:0015722">
    <property type="term" value="P:canalicular bile acid transport"/>
    <property type="evidence" value="ECO:0000314"/>
    <property type="project" value="RGD"/>
</dbReference>
<dbReference type="GO" id="GO:0071320">
    <property type="term" value="P:cellular response to cAMP"/>
    <property type="evidence" value="ECO:0000266"/>
    <property type="project" value="RGD"/>
</dbReference>
<dbReference type="GO" id="GO:0071722">
    <property type="term" value="P:detoxification of arsenic-containing substance"/>
    <property type="evidence" value="ECO:0000250"/>
    <property type="project" value="UniProtKB"/>
</dbReference>
<dbReference type="GO" id="GO:0015793">
    <property type="term" value="P:glycerol transmembrane transport"/>
    <property type="evidence" value="ECO:0000250"/>
    <property type="project" value="UniProtKB"/>
</dbReference>
<dbReference type="GO" id="GO:0015791">
    <property type="term" value="P:polyol transmembrane transport"/>
    <property type="evidence" value="ECO:0000314"/>
    <property type="project" value="UniProtKB"/>
</dbReference>
<dbReference type="GO" id="GO:0006863">
    <property type="term" value="P:purine nucleobase transport"/>
    <property type="evidence" value="ECO:0000314"/>
    <property type="project" value="UniProtKB"/>
</dbReference>
<dbReference type="GO" id="GO:0015855">
    <property type="term" value="P:pyrimidine nucleobase transport"/>
    <property type="evidence" value="ECO:0000314"/>
    <property type="project" value="UniProtKB"/>
</dbReference>
<dbReference type="GO" id="GO:0006970">
    <property type="term" value="P:response to osmotic stress"/>
    <property type="evidence" value="ECO:0000304"/>
    <property type="project" value="UniProtKB"/>
</dbReference>
<dbReference type="GO" id="GO:0048265">
    <property type="term" value="P:response to pain"/>
    <property type="evidence" value="ECO:0000315"/>
    <property type="project" value="RGD"/>
</dbReference>
<dbReference type="GO" id="GO:0071918">
    <property type="term" value="P:urea transmembrane transport"/>
    <property type="evidence" value="ECO:0000250"/>
    <property type="project" value="UniProtKB"/>
</dbReference>
<dbReference type="GO" id="GO:0006833">
    <property type="term" value="P:water transport"/>
    <property type="evidence" value="ECO:0000314"/>
    <property type="project" value="RGD"/>
</dbReference>
<dbReference type="CDD" id="cd00333">
    <property type="entry name" value="MIP"/>
    <property type="match status" value="1"/>
</dbReference>
<dbReference type="FunFam" id="1.20.1080.10:FF:000005">
    <property type="entry name" value="Aquaporin 3"/>
    <property type="match status" value="1"/>
</dbReference>
<dbReference type="Gene3D" id="1.20.1080.10">
    <property type="entry name" value="Glycerol uptake facilitator protein"/>
    <property type="match status" value="1"/>
</dbReference>
<dbReference type="InterPro" id="IPR023271">
    <property type="entry name" value="Aquaporin-like"/>
</dbReference>
<dbReference type="InterPro" id="IPR015685">
    <property type="entry name" value="Aquaporin_9"/>
</dbReference>
<dbReference type="InterPro" id="IPR000425">
    <property type="entry name" value="MIP"/>
</dbReference>
<dbReference type="InterPro" id="IPR050363">
    <property type="entry name" value="MIP/Aquaporin"/>
</dbReference>
<dbReference type="InterPro" id="IPR022357">
    <property type="entry name" value="MIP_CS"/>
</dbReference>
<dbReference type="NCBIfam" id="TIGR00861">
    <property type="entry name" value="MIP"/>
    <property type="match status" value="1"/>
</dbReference>
<dbReference type="PANTHER" id="PTHR43829">
    <property type="entry name" value="AQUAPORIN OR AQUAGLYCEROPORIN RELATED"/>
    <property type="match status" value="1"/>
</dbReference>
<dbReference type="PANTHER" id="PTHR43829:SF6">
    <property type="entry name" value="AQUAPORIN-9"/>
    <property type="match status" value="1"/>
</dbReference>
<dbReference type="Pfam" id="PF00230">
    <property type="entry name" value="MIP"/>
    <property type="match status" value="1"/>
</dbReference>
<dbReference type="PRINTS" id="PR02021">
    <property type="entry name" value="AQUAPORIN9"/>
</dbReference>
<dbReference type="PRINTS" id="PR00783">
    <property type="entry name" value="MINTRINSICP"/>
</dbReference>
<dbReference type="SUPFAM" id="SSF81338">
    <property type="entry name" value="Aquaporin-like"/>
    <property type="match status" value="1"/>
</dbReference>
<dbReference type="PROSITE" id="PS00221">
    <property type="entry name" value="MIP"/>
    <property type="match status" value="1"/>
</dbReference>
<evidence type="ECO:0000250" key="1">
    <source>
        <dbReference type="UniProtKB" id="O43315"/>
    </source>
</evidence>
<evidence type="ECO:0000250" key="2">
    <source>
        <dbReference type="UniProtKB" id="Q96PS8"/>
    </source>
</evidence>
<evidence type="ECO:0000250" key="3">
    <source>
        <dbReference type="UniProtKB" id="Q9JJJ3"/>
    </source>
</evidence>
<evidence type="ECO:0000269" key="4">
    <source>
    </source>
</evidence>
<evidence type="ECO:0000269" key="5">
    <source>
    </source>
</evidence>
<evidence type="ECO:0000269" key="6">
    <source>
    </source>
</evidence>
<evidence type="ECO:0000269" key="7">
    <source>
    </source>
</evidence>
<evidence type="ECO:0000303" key="8">
    <source>
    </source>
</evidence>
<evidence type="ECO:0000305" key="9"/>
<evidence type="ECO:0000305" key="10">
    <source>
    </source>
</evidence>
<evidence type="ECO:0000305" key="11">
    <source>
    </source>
</evidence>
<evidence type="ECO:0000305" key="12">
    <source>
    </source>
</evidence>
<evidence type="ECO:0000305" key="13">
    <source>
    </source>
</evidence>
<evidence type="ECO:0000312" key="14">
    <source>
        <dbReference type="RGD" id="68433"/>
    </source>
</evidence>
<feature type="chain" id="PRO_0000063966" description="Aquaporin-9">
    <location>
        <begin position="1"/>
        <end position="295"/>
    </location>
</feature>
<feature type="topological domain" description="Cytoplasmic" evidence="2">
    <location>
        <begin position="1"/>
        <end position="24"/>
    </location>
</feature>
<feature type="transmembrane region" description="Helical; Name=1" evidence="2">
    <location>
        <begin position="25"/>
        <end position="43"/>
    </location>
</feature>
<feature type="topological domain" description="Extracellular" evidence="2">
    <location>
        <begin position="44"/>
        <end position="57"/>
    </location>
</feature>
<feature type="transmembrane region" description="Helical; Name=2" evidence="2">
    <location>
        <begin position="58"/>
        <end position="77"/>
    </location>
</feature>
<feature type="topological domain" description="Cytoplasmic" evidence="2">
    <location>
        <begin position="78"/>
        <end position="79"/>
    </location>
</feature>
<feature type="intramembrane region" description="Discontinuously helical" evidence="2">
    <location>
        <begin position="80"/>
        <end position="92"/>
    </location>
</feature>
<feature type="topological domain" description="Cytoplasmic" evidence="2">
    <location>
        <begin position="93"/>
        <end position="98"/>
    </location>
</feature>
<feature type="transmembrane region" description="Helical; Name=3" evidence="2">
    <location>
        <begin position="99"/>
        <end position="123"/>
    </location>
</feature>
<feature type="topological domain" description="Extracellular" evidence="2">
    <location>
        <begin position="124"/>
        <end position="160"/>
    </location>
</feature>
<feature type="transmembrane region" description="Helical; Name=4" evidence="2">
    <location>
        <begin position="161"/>
        <end position="178"/>
    </location>
</feature>
<feature type="topological domain" description="Cytoplasmic" evidence="2">
    <location>
        <begin position="179"/>
        <end position="190"/>
    </location>
</feature>
<feature type="transmembrane region" description="Helical; Name=5" evidence="2">
    <location>
        <begin position="191"/>
        <end position="207"/>
    </location>
</feature>
<feature type="topological domain" description="Extracellular" evidence="2">
    <location>
        <begin position="208"/>
        <end position="210"/>
    </location>
</feature>
<feature type="intramembrane region" description="Discontinuously helical" evidence="2">
    <location>
        <begin position="211"/>
        <end position="225"/>
    </location>
</feature>
<feature type="topological domain" description="Extracellular" evidence="2">
    <location>
        <begin position="226"/>
        <end position="243"/>
    </location>
</feature>
<feature type="transmembrane region" description="Helical; Name=6" evidence="2">
    <location>
        <begin position="244"/>
        <end position="264"/>
    </location>
</feature>
<feature type="topological domain" description="Cytoplasmic" evidence="2">
    <location>
        <begin position="265"/>
        <end position="295"/>
    </location>
</feature>
<feature type="short sequence motif" description="NPA 1" evidence="2">
    <location>
        <begin position="84"/>
        <end position="86"/>
    </location>
</feature>
<feature type="short sequence motif" description="NPA 2" evidence="2">
    <location>
        <begin position="216"/>
        <end position="218"/>
    </location>
</feature>
<feature type="sequence conflict" description="In Ref. 2; BAA33680." evidence="9" ref="2">
    <original>A</original>
    <variation>V</variation>
    <location>
        <position position="93"/>
    </location>
</feature>
<feature type="sequence conflict" description="In Ref. 2; BAA33680." evidence="9" ref="2">
    <original>G</original>
    <variation>S</variation>
    <location>
        <position position="197"/>
    </location>
</feature>
<feature type="sequence conflict" description="In Ref. 2; BAA33680." evidence="9" ref="2">
    <original>L</original>
    <variation>P</variation>
    <location>
        <position position="207"/>
    </location>
</feature>
<gene>
    <name evidence="14" type="primary">Aqp9</name>
    <name evidence="8" type="synonym">Aqp9l</name>
</gene>
<sequence>MPSEKDGAKKSLMQRLALKSRIAKETLSEFLGTFIMIVLGCSSIAQAVLSRERFGGIITINIGFASAVVMALYVTFGISGGHINPAVSFAMCAFGRMEWFKFPFYVGAQFLGAFVGAATVFGIYYDGLMAFAGGKLLVVGENATAFIFATYPAPFISTPGAFVDQVVSTMFLLLIVFAMFDSRNLGVPRGLEPVVIGLLIIVLSCSLGLNSGCAMNPARDLSPRLFTALAGWGFEVFTVGNNFWWIPVVGPMIGAFLGGLIYILFIQMHHSKLDPDMKAEPSENNLEKHELSVIM</sequence>
<organism>
    <name type="scientific">Rattus norvegicus</name>
    <name type="common">Rat</name>
    <dbReference type="NCBI Taxonomy" id="10116"/>
    <lineage>
        <taxon>Eukaryota</taxon>
        <taxon>Metazoa</taxon>
        <taxon>Chordata</taxon>
        <taxon>Craniata</taxon>
        <taxon>Vertebrata</taxon>
        <taxon>Euteleostomi</taxon>
        <taxon>Mammalia</taxon>
        <taxon>Eutheria</taxon>
        <taxon>Euarchontoglires</taxon>
        <taxon>Glires</taxon>
        <taxon>Rodentia</taxon>
        <taxon>Myomorpha</taxon>
        <taxon>Muroidea</taxon>
        <taxon>Muridae</taxon>
        <taxon>Murinae</taxon>
        <taxon>Rattus</taxon>
    </lineage>
</organism>
<protein>
    <recommendedName>
        <fullName evidence="13">Aquaporin-9</fullName>
        <shortName evidence="13">AQP-9</shortName>
    </recommendedName>
    <alternativeName>
        <fullName evidence="11">Aquaglyceroporin-9</fullName>
    </alternativeName>
</protein>
<name>AQP9_RAT</name>